<dbReference type="EC" id="3.6.5.3" evidence="2"/>
<dbReference type="EMBL" id="BA000012">
    <property type="protein sequence ID" value="BAB47886.1"/>
    <property type="molecule type" value="Genomic_DNA"/>
</dbReference>
<dbReference type="EMBL" id="BA000012">
    <property type="protein sequence ID" value="BAB47904.1"/>
    <property type="molecule type" value="Genomic_DNA"/>
</dbReference>
<dbReference type="SMR" id="Q981F7"/>
<dbReference type="KEGG" id="mlo:mlr0263"/>
<dbReference type="KEGG" id="mlo:mlr0288"/>
<dbReference type="eggNOG" id="COG0050">
    <property type="taxonomic scope" value="Bacteria"/>
</dbReference>
<dbReference type="HOGENOM" id="CLU_007265_0_1_5"/>
<dbReference type="Proteomes" id="UP000000552">
    <property type="component" value="Chromosome"/>
</dbReference>
<dbReference type="GO" id="GO:0005829">
    <property type="term" value="C:cytosol"/>
    <property type="evidence" value="ECO:0007669"/>
    <property type="project" value="TreeGrafter"/>
</dbReference>
<dbReference type="GO" id="GO:0005525">
    <property type="term" value="F:GTP binding"/>
    <property type="evidence" value="ECO:0007669"/>
    <property type="project" value="UniProtKB-UniRule"/>
</dbReference>
<dbReference type="GO" id="GO:0003924">
    <property type="term" value="F:GTPase activity"/>
    <property type="evidence" value="ECO:0007669"/>
    <property type="project" value="InterPro"/>
</dbReference>
<dbReference type="GO" id="GO:0097216">
    <property type="term" value="F:guanosine tetraphosphate binding"/>
    <property type="evidence" value="ECO:0007669"/>
    <property type="project" value="UniProtKB-ARBA"/>
</dbReference>
<dbReference type="GO" id="GO:0003746">
    <property type="term" value="F:translation elongation factor activity"/>
    <property type="evidence" value="ECO:0007669"/>
    <property type="project" value="UniProtKB-UniRule"/>
</dbReference>
<dbReference type="CDD" id="cd01884">
    <property type="entry name" value="EF_Tu"/>
    <property type="match status" value="1"/>
</dbReference>
<dbReference type="CDD" id="cd03697">
    <property type="entry name" value="EFTU_II"/>
    <property type="match status" value="1"/>
</dbReference>
<dbReference type="CDD" id="cd03707">
    <property type="entry name" value="EFTU_III"/>
    <property type="match status" value="1"/>
</dbReference>
<dbReference type="FunFam" id="2.40.30.10:FF:000001">
    <property type="entry name" value="Elongation factor Tu"/>
    <property type="match status" value="1"/>
</dbReference>
<dbReference type="FunFam" id="3.40.50.300:FF:000003">
    <property type="entry name" value="Elongation factor Tu"/>
    <property type="match status" value="1"/>
</dbReference>
<dbReference type="Gene3D" id="3.40.50.300">
    <property type="entry name" value="P-loop containing nucleotide triphosphate hydrolases"/>
    <property type="match status" value="1"/>
</dbReference>
<dbReference type="Gene3D" id="2.40.30.10">
    <property type="entry name" value="Translation factors"/>
    <property type="match status" value="2"/>
</dbReference>
<dbReference type="HAMAP" id="MF_00118_B">
    <property type="entry name" value="EF_Tu_B"/>
    <property type="match status" value="1"/>
</dbReference>
<dbReference type="InterPro" id="IPR041709">
    <property type="entry name" value="EF-Tu_GTP-bd"/>
</dbReference>
<dbReference type="InterPro" id="IPR050055">
    <property type="entry name" value="EF-Tu_GTPase"/>
</dbReference>
<dbReference type="InterPro" id="IPR004161">
    <property type="entry name" value="EFTu-like_2"/>
</dbReference>
<dbReference type="InterPro" id="IPR033720">
    <property type="entry name" value="EFTU_2"/>
</dbReference>
<dbReference type="InterPro" id="IPR031157">
    <property type="entry name" value="G_TR_CS"/>
</dbReference>
<dbReference type="InterPro" id="IPR027417">
    <property type="entry name" value="P-loop_NTPase"/>
</dbReference>
<dbReference type="InterPro" id="IPR005225">
    <property type="entry name" value="Small_GTP-bd"/>
</dbReference>
<dbReference type="InterPro" id="IPR000795">
    <property type="entry name" value="T_Tr_GTP-bd_dom"/>
</dbReference>
<dbReference type="InterPro" id="IPR009000">
    <property type="entry name" value="Transl_B-barrel_sf"/>
</dbReference>
<dbReference type="InterPro" id="IPR009001">
    <property type="entry name" value="Transl_elong_EF1A/Init_IF2_C"/>
</dbReference>
<dbReference type="InterPro" id="IPR004541">
    <property type="entry name" value="Transl_elong_EFTu/EF1A_bac/org"/>
</dbReference>
<dbReference type="InterPro" id="IPR004160">
    <property type="entry name" value="Transl_elong_EFTu/EF1A_C"/>
</dbReference>
<dbReference type="NCBIfam" id="TIGR00485">
    <property type="entry name" value="EF-Tu"/>
    <property type="match status" value="1"/>
</dbReference>
<dbReference type="NCBIfam" id="NF000766">
    <property type="entry name" value="PRK00049.1"/>
    <property type="match status" value="1"/>
</dbReference>
<dbReference type="NCBIfam" id="NF009372">
    <property type="entry name" value="PRK12735.1"/>
    <property type="match status" value="1"/>
</dbReference>
<dbReference type="NCBIfam" id="NF009373">
    <property type="entry name" value="PRK12736.1"/>
    <property type="match status" value="1"/>
</dbReference>
<dbReference type="NCBIfam" id="TIGR00231">
    <property type="entry name" value="small_GTP"/>
    <property type="match status" value="1"/>
</dbReference>
<dbReference type="PANTHER" id="PTHR43721:SF22">
    <property type="entry name" value="ELONGATION FACTOR TU, MITOCHONDRIAL"/>
    <property type="match status" value="1"/>
</dbReference>
<dbReference type="PANTHER" id="PTHR43721">
    <property type="entry name" value="ELONGATION FACTOR TU-RELATED"/>
    <property type="match status" value="1"/>
</dbReference>
<dbReference type="Pfam" id="PF00009">
    <property type="entry name" value="GTP_EFTU"/>
    <property type="match status" value="1"/>
</dbReference>
<dbReference type="Pfam" id="PF03144">
    <property type="entry name" value="GTP_EFTU_D2"/>
    <property type="match status" value="1"/>
</dbReference>
<dbReference type="Pfam" id="PF03143">
    <property type="entry name" value="GTP_EFTU_D3"/>
    <property type="match status" value="1"/>
</dbReference>
<dbReference type="PRINTS" id="PR00315">
    <property type="entry name" value="ELONGATNFCT"/>
</dbReference>
<dbReference type="SUPFAM" id="SSF50465">
    <property type="entry name" value="EF-Tu/eEF-1alpha/eIF2-gamma C-terminal domain"/>
    <property type="match status" value="1"/>
</dbReference>
<dbReference type="SUPFAM" id="SSF52540">
    <property type="entry name" value="P-loop containing nucleoside triphosphate hydrolases"/>
    <property type="match status" value="1"/>
</dbReference>
<dbReference type="SUPFAM" id="SSF50447">
    <property type="entry name" value="Translation proteins"/>
    <property type="match status" value="1"/>
</dbReference>
<dbReference type="PROSITE" id="PS00301">
    <property type="entry name" value="G_TR_1"/>
    <property type="match status" value="1"/>
</dbReference>
<dbReference type="PROSITE" id="PS51722">
    <property type="entry name" value="G_TR_2"/>
    <property type="match status" value="1"/>
</dbReference>
<feature type="chain" id="PRO_0000091370" description="Elongation factor Tu">
    <location>
        <begin position="1"/>
        <end position="391"/>
    </location>
</feature>
<feature type="domain" description="tr-type G">
    <location>
        <begin position="10"/>
        <end position="201"/>
    </location>
</feature>
<feature type="region of interest" description="G1" evidence="1">
    <location>
        <begin position="19"/>
        <end position="26"/>
    </location>
</feature>
<feature type="region of interest" description="G2" evidence="1">
    <location>
        <begin position="55"/>
        <end position="59"/>
    </location>
</feature>
<feature type="region of interest" description="G3" evidence="1">
    <location>
        <begin position="76"/>
        <end position="79"/>
    </location>
</feature>
<feature type="region of interest" description="G4" evidence="1">
    <location>
        <begin position="131"/>
        <end position="134"/>
    </location>
</feature>
<feature type="region of interest" description="G5" evidence="1">
    <location>
        <begin position="169"/>
        <end position="171"/>
    </location>
</feature>
<feature type="binding site" evidence="2">
    <location>
        <begin position="19"/>
        <end position="26"/>
    </location>
    <ligand>
        <name>GTP</name>
        <dbReference type="ChEBI" id="CHEBI:37565"/>
    </ligand>
</feature>
<feature type="binding site" evidence="2">
    <location>
        <position position="26"/>
    </location>
    <ligand>
        <name>Mg(2+)</name>
        <dbReference type="ChEBI" id="CHEBI:18420"/>
    </ligand>
</feature>
<feature type="binding site" evidence="2">
    <location>
        <begin position="76"/>
        <end position="80"/>
    </location>
    <ligand>
        <name>GTP</name>
        <dbReference type="ChEBI" id="CHEBI:37565"/>
    </ligand>
</feature>
<feature type="binding site" evidence="2">
    <location>
        <begin position="131"/>
        <end position="134"/>
    </location>
    <ligand>
        <name>GTP</name>
        <dbReference type="ChEBI" id="CHEBI:37565"/>
    </ligand>
</feature>
<proteinExistence type="inferred from homology"/>
<reference key="1">
    <citation type="journal article" date="2000" name="DNA Res.">
        <title>Complete genome structure of the nitrogen-fixing symbiotic bacterium Mesorhizobium loti.</title>
        <authorList>
            <person name="Kaneko T."/>
            <person name="Nakamura Y."/>
            <person name="Sato S."/>
            <person name="Asamizu E."/>
            <person name="Kato T."/>
            <person name="Sasamoto S."/>
            <person name="Watanabe A."/>
            <person name="Idesawa K."/>
            <person name="Ishikawa A."/>
            <person name="Kawashima K."/>
            <person name="Kimura T."/>
            <person name="Kishida Y."/>
            <person name="Kiyokawa C."/>
            <person name="Kohara M."/>
            <person name="Matsumoto M."/>
            <person name="Matsuno A."/>
            <person name="Mochizuki Y."/>
            <person name="Nakayama S."/>
            <person name="Nakazaki N."/>
            <person name="Shimpo S."/>
            <person name="Sugimoto M."/>
            <person name="Takeuchi C."/>
            <person name="Yamada M."/>
            <person name="Tabata S."/>
        </authorList>
    </citation>
    <scope>NUCLEOTIDE SEQUENCE [LARGE SCALE GENOMIC DNA]</scope>
    <source>
        <strain>LMG 29417 / CECT 9101 / MAFF 303099</strain>
    </source>
</reference>
<sequence>MAKGKFERTKPHVNIGTIGHVDHGKTSLTAAITKYFGEYKRYDQIDAAPEEKARGITISTAHVEYETANRHYAHVDCPGHADYVKNMITGAAQMDGAILVVSAADGPMPQTREHILLARQVGVPSIVVFLNKVDQVDDAELLELVELEVRELLSKNEFPGDDIPIVKGSALAALEDSNKTIGEDAIRELMAQVDAYIPTPVRPLDKPFLMPIEDVFSISGRGTVVTGRVERGVVKVGEELEIIGIRPTTKTTCTGVEMFRKLLDQGQAGDNIGALLRGVDREGVERGQVLAKPGTVKPHKKFVAEAYILTKDEGGRHTPFFTNYRPQFYFRTTDVTGIVSLPAGTEMVMPGDNITVDVELIVPIAMEEKLRFAIREGGRTVGAGIVVTIKE</sequence>
<gene>
    <name evidence="2" type="primary">tufA</name>
    <name type="ordered locus">mlr0263</name>
</gene>
<gene>
    <name evidence="2" type="primary">tufB</name>
    <name type="ordered locus">mlr0288</name>
</gene>
<accession>Q981F7</accession>
<name>EFTU_RHILO</name>
<comment type="function">
    <text evidence="2">GTP hydrolase that promotes the GTP-dependent binding of aminoacyl-tRNA to the A-site of ribosomes during protein biosynthesis.</text>
</comment>
<comment type="catalytic activity">
    <reaction evidence="2">
        <text>GTP + H2O = GDP + phosphate + H(+)</text>
        <dbReference type="Rhea" id="RHEA:19669"/>
        <dbReference type="ChEBI" id="CHEBI:15377"/>
        <dbReference type="ChEBI" id="CHEBI:15378"/>
        <dbReference type="ChEBI" id="CHEBI:37565"/>
        <dbReference type="ChEBI" id="CHEBI:43474"/>
        <dbReference type="ChEBI" id="CHEBI:58189"/>
        <dbReference type="EC" id="3.6.5.3"/>
    </reaction>
    <physiologicalReaction direction="left-to-right" evidence="2">
        <dbReference type="Rhea" id="RHEA:19670"/>
    </physiologicalReaction>
</comment>
<comment type="subunit">
    <text evidence="2">Monomer.</text>
</comment>
<comment type="subcellular location">
    <subcellularLocation>
        <location evidence="2">Cytoplasm</location>
    </subcellularLocation>
</comment>
<comment type="similarity">
    <text evidence="2">Belongs to the TRAFAC class translation factor GTPase superfamily. Classic translation factor GTPase family. EF-Tu/EF-1A subfamily.</text>
</comment>
<organism>
    <name type="scientific">Mesorhizobium japonicum (strain LMG 29417 / CECT 9101 / MAFF 303099)</name>
    <name type="common">Mesorhizobium loti (strain MAFF 303099)</name>
    <dbReference type="NCBI Taxonomy" id="266835"/>
    <lineage>
        <taxon>Bacteria</taxon>
        <taxon>Pseudomonadati</taxon>
        <taxon>Pseudomonadota</taxon>
        <taxon>Alphaproteobacteria</taxon>
        <taxon>Hyphomicrobiales</taxon>
        <taxon>Phyllobacteriaceae</taxon>
        <taxon>Mesorhizobium</taxon>
    </lineage>
</organism>
<evidence type="ECO:0000250" key="1"/>
<evidence type="ECO:0000255" key="2">
    <source>
        <dbReference type="HAMAP-Rule" id="MF_00118"/>
    </source>
</evidence>
<keyword id="KW-0963">Cytoplasm</keyword>
<keyword id="KW-0251">Elongation factor</keyword>
<keyword id="KW-0342">GTP-binding</keyword>
<keyword id="KW-0378">Hydrolase</keyword>
<keyword id="KW-0460">Magnesium</keyword>
<keyword id="KW-0479">Metal-binding</keyword>
<keyword id="KW-0547">Nucleotide-binding</keyword>
<keyword id="KW-0648">Protein biosynthesis</keyword>
<protein>
    <recommendedName>
        <fullName evidence="2">Elongation factor Tu</fullName>
        <shortName evidence="2">EF-Tu</shortName>
        <ecNumber evidence="2">3.6.5.3</ecNumber>
    </recommendedName>
</protein>